<gene>
    <name type="ordered locus">At3g16210</name>
    <name type="ORF">MYA6.2</name>
</gene>
<evidence type="ECO:0000255" key="1">
    <source>
        <dbReference type="PROSITE-ProRule" id="PRU00080"/>
    </source>
</evidence>
<reference key="1">
    <citation type="journal article" date="2000" name="DNA Res.">
        <title>Structural analysis of Arabidopsis thaliana chromosome 3. I. Sequence features of the regions of 4,504,864 bp covered by sixty P1 and TAC clones.</title>
        <authorList>
            <person name="Sato S."/>
            <person name="Nakamura Y."/>
            <person name="Kaneko T."/>
            <person name="Katoh T."/>
            <person name="Asamizu E."/>
            <person name="Tabata S."/>
        </authorList>
    </citation>
    <scope>NUCLEOTIDE SEQUENCE [LARGE SCALE GENOMIC DNA]</scope>
    <source>
        <strain>cv. Columbia</strain>
    </source>
</reference>
<reference key="2">
    <citation type="journal article" date="2017" name="Plant J.">
        <title>Araport11: a complete reannotation of the Arabidopsis thaliana reference genome.</title>
        <authorList>
            <person name="Cheng C.Y."/>
            <person name="Krishnakumar V."/>
            <person name="Chan A.P."/>
            <person name="Thibaud-Nissen F."/>
            <person name="Schobel S."/>
            <person name="Town C.D."/>
        </authorList>
    </citation>
    <scope>GENOME REANNOTATION</scope>
    <source>
        <strain>cv. Columbia</strain>
    </source>
</reference>
<organism>
    <name type="scientific">Arabidopsis thaliana</name>
    <name type="common">Mouse-ear cress</name>
    <dbReference type="NCBI Taxonomy" id="3702"/>
    <lineage>
        <taxon>Eukaryota</taxon>
        <taxon>Viridiplantae</taxon>
        <taxon>Streptophyta</taxon>
        <taxon>Embryophyta</taxon>
        <taxon>Tracheophyta</taxon>
        <taxon>Spermatophyta</taxon>
        <taxon>Magnoliopsida</taxon>
        <taxon>eudicotyledons</taxon>
        <taxon>Gunneridae</taxon>
        <taxon>Pentapetalae</taxon>
        <taxon>rosids</taxon>
        <taxon>malvids</taxon>
        <taxon>Brassicales</taxon>
        <taxon>Brassicaceae</taxon>
        <taxon>Camelineae</taxon>
        <taxon>Arabidopsis</taxon>
    </lineage>
</organism>
<dbReference type="EMBL" id="AB023046">
    <property type="protein sequence ID" value="BAB01261.1"/>
    <property type="molecule type" value="Genomic_DNA"/>
</dbReference>
<dbReference type="EMBL" id="CP002686">
    <property type="protein sequence ID" value="AEE75784.1"/>
    <property type="molecule type" value="Genomic_DNA"/>
</dbReference>
<dbReference type="RefSeq" id="NP_188242.1">
    <property type="nucleotide sequence ID" value="NM_112492.2"/>
</dbReference>
<dbReference type="SMR" id="Q9LU24"/>
<dbReference type="BioGRID" id="6201">
    <property type="interactions" value="2"/>
</dbReference>
<dbReference type="FunCoup" id="Q9LU24">
    <property type="interactions" value="1"/>
</dbReference>
<dbReference type="STRING" id="3702.Q9LU24"/>
<dbReference type="iPTMnet" id="Q9LU24"/>
<dbReference type="PaxDb" id="3702-AT3G16210.1"/>
<dbReference type="EnsemblPlants" id="AT3G16210.1">
    <property type="protein sequence ID" value="AT3G16210.1"/>
    <property type="gene ID" value="AT3G16210"/>
</dbReference>
<dbReference type="GeneID" id="820867"/>
<dbReference type="Gramene" id="AT3G16210.1">
    <property type="protein sequence ID" value="AT3G16210.1"/>
    <property type="gene ID" value="AT3G16210"/>
</dbReference>
<dbReference type="KEGG" id="ath:AT3G16210"/>
<dbReference type="Araport" id="AT3G16210"/>
<dbReference type="TAIR" id="AT3G16210"/>
<dbReference type="eggNOG" id="ENOG502S9E8">
    <property type="taxonomic scope" value="Eukaryota"/>
</dbReference>
<dbReference type="HOGENOM" id="CLU_910142_0_0_1"/>
<dbReference type="InParanoid" id="Q9LU24"/>
<dbReference type="OMA" id="AHVFEFR"/>
<dbReference type="OrthoDB" id="606438at2759"/>
<dbReference type="PhylomeDB" id="Q9LU24"/>
<dbReference type="PRO" id="PR:Q9LU24"/>
<dbReference type="Proteomes" id="UP000006548">
    <property type="component" value="Chromosome 3"/>
</dbReference>
<dbReference type="ExpressionAtlas" id="Q9LU24">
    <property type="expression patterns" value="baseline and differential"/>
</dbReference>
<dbReference type="CDD" id="cd22157">
    <property type="entry name" value="F-box_AtFBW1-like"/>
    <property type="match status" value="1"/>
</dbReference>
<dbReference type="Gene3D" id="1.20.1280.50">
    <property type="match status" value="1"/>
</dbReference>
<dbReference type="InterPro" id="IPR006527">
    <property type="entry name" value="F-box-assoc_dom_typ1"/>
</dbReference>
<dbReference type="InterPro" id="IPR017451">
    <property type="entry name" value="F-box-assoc_interact_dom"/>
</dbReference>
<dbReference type="InterPro" id="IPR036047">
    <property type="entry name" value="F-box-like_dom_sf"/>
</dbReference>
<dbReference type="InterPro" id="IPR001810">
    <property type="entry name" value="F-box_dom"/>
</dbReference>
<dbReference type="InterPro" id="IPR050796">
    <property type="entry name" value="SCF_F-box_component"/>
</dbReference>
<dbReference type="NCBIfam" id="TIGR01640">
    <property type="entry name" value="F_box_assoc_1"/>
    <property type="match status" value="1"/>
</dbReference>
<dbReference type="PANTHER" id="PTHR31672">
    <property type="entry name" value="BNACNNG10540D PROTEIN"/>
    <property type="match status" value="1"/>
</dbReference>
<dbReference type="PANTHER" id="PTHR31672:SF13">
    <property type="entry name" value="F-BOX PROTEIN CPR30-LIKE"/>
    <property type="match status" value="1"/>
</dbReference>
<dbReference type="Pfam" id="PF00646">
    <property type="entry name" value="F-box"/>
    <property type="match status" value="1"/>
</dbReference>
<dbReference type="Pfam" id="PF07734">
    <property type="entry name" value="FBA_1"/>
    <property type="match status" value="1"/>
</dbReference>
<dbReference type="SMART" id="SM00256">
    <property type="entry name" value="FBOX"/>
    <property type="match status" value="1"/>
</dbReference>
<dbReference type="SUPFAM" id="SSF81383">
    <property type="entry name" value="F-box domain"/>
    <property type="match status" value="1"/>
</dbReference>
<dbReference type="SUPFAM" id="SSF101898">
    <property type="entry name" value="NHL repeat"/>
    <property type="match status" value="1"/>
</dbReference>
<dbReference type="PROSITE" id="PS50181">
    <property type="entry name" value="FBOX"/>
    <property type="match status" value="1"/>
</dbReference>
<name>FB145_ARATH</name>
<proteinExistence type="predicted"/>
<protein>
    <recommendedName>
        <fullName>Putative F-box protein At3g16210</fullName>
    </recommendedName>
</protein>
<sequence length="360" mass="42403">MSKFLPEELAIEILVRLSMKDLARFRCVCKTWRDLINDPGFTETYRDMSPAKFVSFYDKNFYMLDVEGKHPVITNKLDFPLDQSMIDESTCVLHCDGTLCVTLKNHTLMVWNPFSKQFKIVPNPGIYQDSNILGFGYDPVHDDYKVVTFIDRLDVSTAHVFEFRTGSWGESLRISYPDWHYRDRRGTFLDQYLYWIAYRSSADRFILCFNLSTHEYRKLPLPVYNQGVTSSWLGVTSQKLCITEYEMCKKEIRISVMEKTGSWSKIISLSMSSFISVQDRIYDYQVEFVSFTRKNDLVVTFTGYNDHFEMEPEERTKKKMFLYKTGNERSEEVRFCNPLAGLRFLCECVETLKIVNRIFI</sequence>
<accession>Q9LU24</accession>
<keyword id="KW-1185">Reference proteome</keyword>
<feature type="chain" id="PRO_0000283415" description="Putative F-box protein At3g16210">
    <location>
        <begin position="1"/>
        <end position="360"/>
    </location>
</feature>
<feature type="domain" description="F-box" evidence="1">
    <location>
        <begin position="1"/>
        <end position="48"/>
    </location>
</feature>